<comment type="function">
    <text evidence="3 4">Uridylyltransferase involved in the biosynthesis of UDP-glucosamine, an essential precursor for glycoprotein and glycolipid synthesis. Can use both UDP-glucosamine and the 4-epimer UDP-galactosamine as substrates, but no other sugars or NTPs (PubMed:20557289). Acts redundantly with GLCNAC1PUT2. Required for gametogenesis and embryo development (PubMed:25231969).</text>
</comment>
<comment type="catalytic activity">
    <reaction evidence="3">
        <text>N-acetyl-alpha-D-glucosamine 1-phosphate + UTP + H(+) = UDP-N-acetyl-alpha-D-glucosamine + diphosphate</text>
        <dbReference type="Rhea" id="RHEA:13509"/>
        <dbReference type="ChEBI" id="CHEBI:15378"/>
        <dbReference type="ChEBI" id="CHEBI:33019"/>
        <dbReference type="ChEBI" id="CHEBI:46398"/>
        <dbReference type="ChEBI" id="CHEBI:57705"/>
        <dbReference type="ChEBI" id="CHEBI:57776"/>
        <dbReference type="EC" id="2.7.7.23"/>
    </reaction>
</comment>
<comment type="catalytic activity">
    <reaction evidence="3">
        <text>N-acetyl-alpha-D-galactosamine 1-phosphate + UTP + H(+) = UDP-N-acetyl-alpha-D-galactosamine + diphosphate</text>
        <dbReference type="Rhea" id="RHEA:34363"/>
        <dbReference type="ChEBI" id="CHEBI:15378"/>
        <dbReference type="ChEBI" id="CHEBI:33019"/>
        <dbReference type="ChEBI" id="CHEBI:46398"/>
        <dbReference type="ChEBI" id="CHEBI:61970"/>
        <dbReference type="ChEBI" id="CHEBI:67138"/>
        <dbReference type="EC" id="2.7.7.83"/>
    </reaction>
</comment>
<comment type="cofactor">
    <cofactor evidence="3">
        <name>Mg(2+)</name>
        <dbReference type="ChEBI" id="CHEBI:18420"/>
    </cofactor>
    <cofactor evidence="3">
        <name>Mn(2+)</name>
        <dbReference type="ChEBI" id="CHEBI:29035"/>
    </cofactor>
</comment>
<comment type="activity regulation">
    <text evidence="3">Inhibited by hygromycin and streptomycin, but not by gentamycin or kanamycin.</text>
</comment>
<comment type="biophysicochemical properties">
    <kinetics>
        <KM evidence="3">337 uM for GlcNAc-1-P</KM>
        <KM evidence="3">295 uM for UTP</KM>
        <KM evidence="3">219 uM for UDP-GlcNAc</KM>
        <KM evidence="3">2768 uM for UDP-GalNAc</KM>
    </kinetics>
    <phDependence>
        <text evidence="3">Optimum pH is 7.6-8.0.</text>
    </phDependence>
    <temperatureDependence>
        <text evidence="3">Optimum temperature is 30-37 degrees Celsius.</text>
    </temperatureDependence>
</comment>
<comment type="pathway">
    <text>Nucleotide-sugar biosynthesis; UDP-N-acetyl-alpha-D-glucosamine biosynthesis; UDP-N-acetyl-alpha-D-glucosamine from N-acetyl-alpha-D-glucosamine 1-phosphate: step 1/1.</text>
</comment>
<comment type="subunit">
    <text evidence="3">Monomer.</text>
</comment>
<comment type="alternative products">
    <event type="alternative splicing"/>
    <isoform>
        <id>Q940S3-1</id>
        <name>1</name>
        <sequence type="displayed"/>
    </isoform>
    <text>Additional isoforms seem to exist.</text>
</comment>
<comment type="tissue specificity">
    <text evidence="4">Expressed in root tips, stipules and mature pollen grains.</text>
</comment>
<comment type="disruption phenotype">
    <text evidence="4">No visible phenotype under normal growth conditions, but the double mutants glcnac1put1 and glcnac1put2 are lethal.</text>
</comment>
<comment type="similarity">
    <text evidence="5">Belongs to the UDPGP type 1 family.</text>
</comment>
<comment type="sequence caution" evidence="5">
    <conflict type="erroneous gene model prediction">
        <sequence resource="EMBL-CDS" id="AAF98204"/>
    </conflict>
</comment>
<comment type="sequence caution" evidence="5">
    <conflict type="erroneous initiation">
        <sequence resource="EMBL-CDS" id="AAF98204"/>
    </conflict>
    <text>Truncated N-terminus.</text>
</comment>
<name>UAP1_ARATH</name>
<reference key="1">
    <citation type="journal article" date="2000" name="Nature">
        <title>Sequence and analysis of chromosome 1 of the plant Arabidopsis thaliana.</title>
        <authorList>
            <person name="Theologis A."/>
            <person name="Ecker J.R."/>
            <person name="Palm C.J."/>
            <person name="Federspiel N.A."/>
            <person name="Kaul S."/>
            <person name="White O."/>
            <person name="Alonso J."/>
            <person name="Altafi H."/>
            <person name="Araujo R."/>
            <person name="Bowman C.L."/>
            <person name="Brooks S.Y."/>
            <person name="Buehler E."/>
            <person name="Chan A."/>
            <person name="Chao Q."/>
            <person name="Chen H."/>
            <person name="Cheuk R.F."/>
            <person name="Chin C.W."/>
            <person name="Chung M.K."/>
            <person name="Conn L."/>
            <person name="Conway A.B."/>
            <person name="Conway A.R."/>
            <person name="Creasy T.H."/>
            <person name="Dewar K."/>
            <person name="Dunn P."/>
            <person name="Etgu P."/>
            <person name="Feldblyum T.V."/>
            <person name="Feng J.-D."/>
            <person name="Fong B."/>
            <person name="Fujii C.Y."/>
            <person name="Gill J.E."/>
            <person name="Goldsmith A.D."/>
            <person name="Haas B."/>
            <person name="Hansen N.F."/>
            <person name="Hughes B."/>
            <person name="Huizar L."/>
            <person name="Hunter J.L."/>
            <person name="Jenkins J."/>
            <person name="Johnson-Hopson C."/>
            <person name="Khan S."/>
            <person name="Khaykin E."/>
            <person name="Kim C.J."/>
            <person name="Koo H.L."/>
            <person name="Kremenetskaia I."/>
            <person name="Kurtz D.B."/>
            <person name="Kwan A."/>
            <person name="Lam B."/>
            <person name="Langin-Hooper S."/>
            <person name="Lee A."/>
            <person name="Lee J.M."/>
            <person name="Lenz C.A."/>
            <person name="Li J.H."/>
            <person name="Li Y.-P."/>
            <person name="Lin X."/>
            <person name="Liu S.X."/>
            <person name="Liu Z.A."/>
            <person name="Luros J.S."/>
            <person name="Maiti R."/>
            <person name="Marziali A."/>
            <person name="Militscher J."/>
            <person name="Miranda M."/>
            <person name="Nguyen M."/>
            <person name="Nierman W.C."/>
            <person name="Osborne B.I."/>
            <person name="Pai G."/>
            <person name="Peterson J."/>
            <person name="Pham P.K."/>
            <person name="Rizzo M."/>
            <person name="Rooney T."/>
            <person name="Rowley D."/>
            <person name="Sakano H."/>
            <person name="Salzberg S.L."/>
            <person name="Schwartz J.R."/>
            <person name="Shinn P."/>
            <person name="Southwick A.M."/>
            <person name="Sun H."/>
            <person name="Tallon L.J."/>
            <person name="Tambunga G."/>
            <person name="Toriumi M.J."/>
            <person name="Town C.D."/>
            <person name="Utterback T."/>
            <person name="Van Aken S."/>
            <person name="Vaysberg M."/>
            <person name="Vysotskaia V.S."/>
            <person name="Walker M."/>
            <person name="Wu D."/>
            <person name="Yu G."/>
            <person name="Fraser C.M."/>
            <person name="Venter J.C."/>
            <person name="Davis R.W."/>
        </authorList>
    </citation>
    <scope>NUCLEOTIDE SEQUENCE [LARGE SCALE GENOMIC DNA]</scope>
    <source>
        <strain>cv. Columbia</strain>
    </source>
</reference>
<reference key="2">
    <citation type="journal article" date="2017" name="Plant J.">
        <title>Araport11: a complete reannotation of the Arabidopsis thaliana reference genome.</title>
        <authorList>
            <person name="Cheng C.Y."/>
            <person name="Krishnakumar V."/>
            <person name="Chan A.P."/>
            <person name="Thibaud-Nissen F."/>
            <person name="Schobel S."/>
            <person name="Town C.D."/>
        </authorList>
    </citation>
    <scope>GENOME REANNOTATION</scope>
    <source>
        <strain>cv. Columbia</strain>
    </source>
</reference>
<reference key="3">
    <citation type="journal article" date="2003" name="Science">
        <title>Empirical analysis of transcriptional activity in the Arabidopsis genome.</title>
        <authorList>
            <person name="Yamada K."/>
            <person name="Lim J."/>
            <person name="Dale J.M."/>
            <person name="Chen H."/>
            <person name="Shinn P."/>
            <person name="Palm C.J."/>
            <person name="Southwick A.M."/>
            <person name="Wu H.C."/>
            <person name="Kim C.J."/>
            <person name="Nguyen M."/>
            <person name="Pham P.K."/>
            <person name="Cheuk R.F."/>
            <person name="Karlin-Newmann G."/>
            <person name="Liu S.X."/>
            <person name="Lam B."/>
            <person name="Sakano H."/>
            <person name="Wu T."/>
            <person name="Yu G."/>
            <person name="Miranda M."/>
            <person name="Quach H.L."/>
            <person name="Tripp M."/>
            <person name="Chang C.H."/>
            <person name="Lee J.M."/>
            <person name="Toriumi M.J."/>
            <person name="Chan M.M."/>
            <person name="Tang C.C."/>
            <person name="Onodera C.S."/>
            <person name="Deng J.M."/>
            <person name="Akiyama K."/>
            <person name="Ansari Y."/>
            <person name="Arakawa T."/>
            <person name="Banh J."/>
            <person name="Banno F."/>
            <person name="Bowser L."/>
            <person name="Brooks S.Y."/>
            <person name="Carninci P."/>
            <person name="Chao Q."/>
            <person name="Choy N."/>
            <person name="Enju A."/>
            <person name="Goldsmith A.D."/>
            <person name="Gurjal M."/>
            <person name="Hansen N.F."/>
            <person name="Hayashizaki Y."/>
            <person name="Johnson-Hopson C."/>
            <person name="Hsuan V.W."/>
            <person name="Iida K."/>
            <person name="Karnes M."/>
            <person name="Khan S."/>
            <person name="Koesema E."/>
            <person name="Ishida J."/>
            <person name="Jiang P.X."/>
            <person name="Jones T."/>
            <person name="Kawai J."/>
            <person name="Kamiya A."/>
            <person name="Meyers C."/>
            <person name="Nakajima M."/>
            <person name="Narusaka M."/>
            <person name="Seki M."/>
            <person name="Sakurai T."/>
            <person name="Satou M."/>
            <person name="Tamse R."/>
            <person name="Vaysberg M."/>
            <person name="Wallender E.K."/>
            <person name="Wong C."/>
            <person name="Yamamura Y."/>
            <person name="Yuan S."/>
            <person name="Shinozaki K."/>
            <person name="Davis R.W."/>
            <person name="Theologis A."/>
            <person name="Ecker J.R."/>
        </authorList>
    </citation>
    <scope>NUCLEOTIDE SEQUENCE [LARGE SCALE MRNA]</scope>
    <source>
        <strain>cv. Columbia</strain>
    </source>
</reference>
<reference key="4">
    <citation type="journal article" date="2010" name="Biochem. J.">
        <title>Identification and characterization of a strict and a promiscuous N-acetylglucosamine-1-P uridylyltransferase in Arabidopsis.</title>
        <authorList>
            <person name="Yang T."/>
            <person name="Echols M."/>
            <person name="Martin A."/>
            <person name="Bar-Peled M."/>
        </authorList>
    </citation>
    <scope>FUNCTION</scope>
    <scope>CATALYTIC ACTIVITY</scope>
    <scope>COFACTOR</scope>
    <scope>BIOPHYSICOCHEMICAL PROPERTIES</scope>
    <scope>SUBSTRATE SPECIFICITY</scope>
    <scope>ACTIVITY REGULATION</scope>
    <scope>SUBUNIT</scope>
    <scope>3D-STRUCTURE MODELING</scope>
    <source>
        <strain>cv. Columbia</strain>
    </source>
</reference>
<reference key="5">
    <citation type="journal article" date="2014" name="Plant Cell Physiol.">
        <title>N-acetylglucosamine-1-P uridylyltransferase 1 and 2 are required for gametogenesis and embryo development in Arabidopsis thaliana.</title>
        <authorList>
            <person name="Chen Y.H."/>
            <person name="Shen H.L."/>
            <person name="Hsu P.J."/>
            <person name="Hwang S.G."/>
            <person name="Cheng W.H."/>
        </authorList>
    </citation>
    <scope>FUNCTION</scope>
    <scope>TISSUE SPECIFICITY</scope>
    <scope>DISRUPTION PHENOTYPE</scope>
</reference>
<sequence>MIEPSMERENGALTAATTTTTAVTSPPPMASSPRQALVERLKDYGQEDIFSLWDELSPDEKDFLVRDIENLDLPRIDRIIRCSLHSQGLPVAAIEPVPENWVSTVDGRTMEDREKWWKMGLKTIYEGKLGVVLLSGGQGTRLGSSDPKGCFNIGLPSGKSLFQIQAERILCVQRLAAQVVSEGPIRPVTIHWYIMTSPFTDEATRKYFSSHKYFGLEPDQISFFQQGTLPCVTKDGKFIMETPFSLAKAPDGNGGVYAALKCSRLLEDMASRGIKYVDCYGVDNVLVRVADPTFLGYFIDKGAASAAKVVRKAYPQEQVGVFVRRGKGGPLTVVEYSELDQSMASAINQRTGRLQYCWSNVCLHMFTLDFLNQVATGLEKDSVYHLAEKKIPSMNGYTMGLKLEQFIFDSFPYAPSTALFEVLREEEFAPVKNVNGSNFDTPESARLLVLRLHTRWVIAAGGFLTHSVPLYATGVEVSPLCSYAGENLEAICRGRTFHAPCEISL</sequence>
<gene>
    <name type="primary">GLCNAC1PUT1</name>
    <name type="ordered locus">At1g31070</name>
    <name type="ORF">F17F8.1</name>
</gene>
<organism>
    <name type="scientific">Arabidopsis thaliana</name>
    <name type="common">Mouse-ear cress</name>
    <dbReference type="NCBI Taxonomy" id="3702"/>
    <lineage>
        <taxon>Eukaryota</taxon>
        <taxon>Viridiplantae</taxon>
        <taxon>Streptophyta</taxon>
        <taxon>Embryophyta</taxon>
        <taxon>Tracheophyta</taxon>
        <taxon>Spermatophyta</taxon>
        <taxon>Magnoliopsida</taxon>
        <taxon>eudicotyledons</taxon>
        <taxon>Gunneridae</taxon>
        <taxon>Pentapetalae</taxon>
        <taxon>rosids</taxon>
        <taxon>malvids</taxon>
        <taxon>Brassicales</taxon>
        <taxon>Brassicaceae</taxon>
        <taxon>Camelineae</taxon>
        <taxon>Arabidopsis</taxon>
    </lineage>
</organism>
<accession>Q940S3</accession>
<accession>Q9FYJ8</accession>
<protein>
    <recommendedName>
        <fullName>UDP-N-acetylglucosamine diphosphorylase 1</fullName>
        <ecNumber>2.7.7.23</ecNumber>
    </recommendedName>
    <alternativeName>
        <fullName>N-acetylglucosamine-1-phosphate uridylyltransferase 1</fullName>
    </alternativeName>
    <alternativeName>
        <fullName>UDP-N-acetylgalactosamine diphosphorylase 1</fullName>
        <ecNumber>2.7.7.83</ecNumber>
    </alternativeName>
</protein>
<dbReference type="EC" id="2.7.7.23"/>
<dbReference type="EC" id="2.7.7.83"/>
<dbReference type="EMBL" id="AC000107">
    <property type="protein sequence ID" value="AAF98204.1"/>
    <property type="status" value="ALT_SEQ"/>
    <property type="molecule type" value="Genomic_DNA"/>
</dbReference>
<dbReference type="EMBL" id="CP002684">
    <property type="protein sequence ID" value="AEE31311.1"/>
    <property type="molecule type" value="Genomic_DNA"/>
</dbReference>
<dbReference type="EMBL" id="AY053411">
    <property type="protein sequence ID" value="AAK96641.1"/>
    <property type="molecule type" value="mRNA"/>
</dbReference>
<dbReference type="PIR" id="B86436">
    <property type="entry name" value="B86436"/>
</dbReference>
<dbReference type="RefSeq" id="NP_564372.3">
    <molecule id="Q940S3-1"/>
    <property type="nucleotide sequence ID" value="NM_102845.5"/>
</dbReference>
<dbReference type="SMR" id="Q940S3"/>
<dbReference type="FunCoup" id="Q940S3">
    <property type="interactions" value="3173"/>
</dbReference>
<dbReference type="STRING" id="3702.Q940S3"/>
<dbReference type="iPTMnet" id="Q940S3"/>
<dbReference type="PaxDb" id="3702-AT1G31070.2"/>
<dbReference type="ProteomicsDB" id="228710">
    <molecule id="Q940S3-1"/>
</dbReference>
<dbReference type="EnsemblPlants" id="AT1G31070.2">
    <molecule id="Q940S3-1"/>
    <property type="protein sequence ID" value="AT1G31070.2"/>
    <property type="gene ID" value="AT1G31070"/>
</dbReference>
<dbReference type="GeneID" id="839993"/>
<dbReference type="Gramene" id="AT1G31070.2">
    <molecule id="Q940S3-1"/>
    <property type="protein sequence ID" value="AT1G31070.2"/>
    <property type="gene ID" value="AT1G31070"/>
</dbReference>
<dbReference type="KEGG" id="ath:AT1G31070"/>
<dbReference type="Araport" id="AT1G31070"/>
<dbReference type="TAIR" id="AT1G31070">
    <property type="gene designation" value="GLCNAC1PUT1"/>
</dbReference>
<dbReference type="eggNOG" id="KOG2388">
    <property type="taxonomic scope" value="Eukaryota"/>
</dbReference>
<dbReference type="HOGENOM" id="CLU_025603_1_1_1"/>
<dbReference type="InParanoid" id="Q940S3"/>
<dbReference type="OMA" id="YFQVDNP"/>
<dbReference type="PhylomeDB" id="Q940S3"/>
<dbReference type="BioCyc" id="ARA:AT1G31070-MONOMER"/>
<dbReference type="BRENDA" id="2.7.7.23">
    <property type="organism ID" value="399"/>
</dbReference>
<dbReference type="SABIO-RK" id="Q940S3"/>
<dbReference type="UniPathway" id="UPA00113">
    <property type="reaction ID" value="UER00533"/>
</dbReference>
<dbReference type="PRO" id="PR:Q940S3"/>
<dbReference type="Proteomes" id="UP000006548">
    <property type="component" value="Chromosome 1"/>
</dbReference>
<dbReference type="ExpressionAtlas" id="Q940S3">
    <property type="expression patterns" value="baseline and differential"/>
</dbReference>
<dbReference type="GO" id="GO:0005886">
    <property type="term" value="C:plasma membrane"/>
    <property type="evidence" value="ECO:0007005"/>
    <property type="project" value="TAIR"/>
</dbReference>
<dbReference type="GO" id="GO:0052630">
    <property type="term" value="F:UDP-N-acetylgalactosamine diphosphorylase activity"/>
    <property type="evidence" value="ECO:0000314"/>
    <property type="project" value="TAIR"/>
</dbReference>
<dbReference type="GO" id="GO:0003977">
    <property type="term" value="F:UDP-N-acetylglucosamine diphosphorylase activity"/>
    <property type="evidence" value="ECO:0000314"/>
    <property type="project" value="TAIR"/>
</dbReference>
<dbReference type="GO" id="GO:0009793">
    <property type="term" value="P:embryo development ending in seed dormancy"/>
    <property type="evidence" value="ECO:0000315"/>
    <property type="project" value="UniProtKB"/>
</dbReference>
<dbReference type="GO" id="GO:0009553">
    <property type="term" value="P:embryo sac development"/>
    <property type="evidence" value="ECO:0000315"/>
    <property type="project" value="UniProtKB"/>
</dbReference>
<dbReference type="GO" id="GO:0009555">
    <property type="term" value="P:pollen development"/>
    <property type="evidence" value="ECO:0000315"/>
    <property type="project" value="UniProtKB"/>
</dbReference>
<dbReference type="GO" id="GO:0019276">
    <property type="term" value="P:UDP-N-acetylgalactosamine metabolic process"/>
    <property type="evidence" value="ECO:0000314"/>
    <property type="project" value="TAIR"/>
</dbReference>
<dbReference type="GO" id="GO:0006048">
    <property type="term" value="P:UDP-N-acetylglucosamine biosynthetic process"/>
    <property type="evidence" value="ECO:0007669"/>
    <property type="project" value="UniProtKB-UniPathway"/>
</dbReference>
<dbReference type="GO" id="GO:0006047">
    <property type="term" value="P:UDP-N-acetylglucosamine metabolic process"/>
    <property type="evidence" value="ECO:0000314"/>
    <property type="project" value="TAIR"/>
</dbReference>
<dbReference type="CDD" id="cd04193">
    <property type="entry name" value="UDPGlcNAc_PPase"/>
    <property type="match status" value="1"/>
</dbReference>
<dbReference type="FunFam" id="3.90.550.10:FF:000072">
    <property type="entry name" value="UDP-N-acetylglucosamine diphosphorylase 2"/>
    <property type="match status" value="1"/>
</dbReference>
<dbReference type="Gene3D" id="3.90.550.10">
    <property type="entry name" value="Spore Coat Polysaccharide Biosynthesis Protein SpsA, Chain A"/>
    <property type="match status" value="1"/>
</dbReference>
<dbReference type="InterPro" id="IPR029044">
    <property type="entry name" value="Nucleotide-diphossugar_trans"/>
</dbReference>
<dbReference type="InterPro" id="IPR039741">
    <property type="entry name" value="UDP-sugar_pyrophosphorylase"/>
</dbReference>
<dbReference type="InterPro" id="IPR002618">
    <property type="entry name" value="UDPGP_fam"/>
</dbReference>
<dbReference type="PANTHER" id="PTHR11952">
    <property type="entry name" value="UDP- GLUCOSE PYROPHOSPHORYLASE"/>
    <property type="match status" value="1"/>
</dbReference>
<dbReference type="PANTHER" id="PTHR11952:SF15">
    <property type="entry name" value="UDP-N-ACETYLGLUCOSAMINE DIPHOSPHORYLASE 1"/>
    <property type="match status" value="1"/>
</dbReference>
<dbReference type="Pfam" id="PF01704">
    <property type="entry name" value="UDPGP"/>
    <property type="match status" value="1"/>
</dbReference>
<dbReference type="SUPFAM" id="SSF53448">
    <property type="entry name" value="Nucleotide-diphospho-sugar transferases"/>
    <property type="match status" value="1"/>
</dbReference>
<evidence type="ECO:0000250" key="1"/>
<evidence type="ECO:0000256" key="2">
    <source>
        <dbReference type="SAM" id="MobiDB-lite"/>
    </source>
</evidence>
<evidence type="ECO:0000269" key="3">
    <source>
    </source>
</evidence>
<evidence type="ECO:0000269" key="4">
    <source>
    </source>
</evidence>
<evidence type="ECO:0000305" key="5"/>
<feature type="chain" id="PRO_0000421832" description="UDP-N-acetylglucosamine diphosphorylase 1">
    <location>
        <begin position="1"/>
        <end position="505"/>
    </location>
</feature>
<feature type="region of interest" description="Disordered" evidence="2">
    <location>
        <begin position="1"/>
        <end position="32"/>
    </location>
</feature>
<feature type="short sequence motif" description="Substrate binding" evidence="1">
    <location>
        <begin position="134"/>
        <end position="137"/>
    </location>
</feature>
<feature type="short sequence motif" description="Substrate binding" evidence="1">
    <location>
        <begin position="335"/>
        <end position="336"/>
    </location>
</feature>
<feature type="compositionally biased region" description="Basic and acidic residues" evidence="2">
    <location>
        <begin position="1"/>
        <end position="10"/>
    </location>
</feature>
<feature type="compositionally biased region" description="Low complexity" evidence="2">
    <location>
        <begin position="14"/>
        <end position="24"/>
    </location>
</feature>
<feature type="binding site" evidence="1">
    <location>
        <position position="253"/>
    </location>
    <ligand>
        <name>substrate</name>
    </ligand>
</feature>
<feature type="binding site" evidence="1">
    <location>
        <position position="432"/>
    </location>
    <ligand>
        <name>substrate</name>
    </ligand>
</feature>
<keyword id="KW-0025">Alternative splicing</keyword>
<keyword id="KW-0548">Nucleotidyltransferase</keyword>
<keyword id="KW-1185">Reference proteome</keyword>
<keyword id="KW-0808">Transferase</keyword>
<proteinExistence type="evidence at protein level"/>